<feature type="chain" id="PRO_0000369452" description="Non-structural protein 3">
    <location>
        <begin position="1"/>
        <end position="313"/>
    </location>
</feature>
<feature type="region of interest" description="RNA-binding" evidence="1">
    <location>
        <begin position="1"/>
        <end position="149"/>
    </location>
</feature>
<feature type="region of interest" description="Dimerization" evidence="1">
    <location>
        <begin position="150"/>
        <end position="206"/>
    </location>
</feature>
<feature type="region of interest" description="Interaction with host ZC3H7B" evidence="1">
    <location>
        <begin position="170"/>
        <end position="234"/>
    </location>
</feature>
<feature type="region of interest" description="Interaction with host EIF4G1" evidence="1">
    <location>
        <begin position="208"/>
        <end position="313"/>
    </location>
</feature>
<feature type="coiled-coil region" evidence="1">
    <location>
        <begin position="166"/>
        <end position="237"/>
    </location>
</feature>
<name>NSP3_ROTHL</name>
<dbReference type="EMBL" id="DQ146697">
    <property type="protein sequence ID" value="ABA34239.1"/>
    <property type="status" value="ALT_INIT"/>
    <property type="molecule type" value="Genomic_RNA"/>
</dbReference>
<dbReference type="EMBL" id="EF672593">
    <property type="protein sequence ID" value="ABV53270.1"/>
    <property type="status" value="ALT_INIT"/>
    <property type="molecule type" value="Genomic_RNA"/>
</dbReference>
<dbReference type="SMR" id="A3DSK9"/>
<dbReference type="Proteomes" id="UP000001459">
    <property type="component" value="Genome"/>
</dbReference>
<dbReference type="GO" id="GO:0030430">
    <property type="term" value="C:host cell cytoplasm"/>
    <property type="evidence" value="ECO:0007669"/>
    <property type="project" value="UniProtKB-SubCell"/>
</dbReference>
<dbReference type="GO" id="GO:0003723">
    <property type="term" value="F:RNA binding"/>
    <property type="evidence" value="ECO:0007669"/>
    <property type="project" value="UniProtKB-UniRule"/>
</dbReference>
<dbReference type="GO" id="GO:0006417">
    <property type="term" value="P:regulation of translation"/>
    <property type="evidence" value="ECO:0007669"/>
    <property type="project" value="UniProtKB-UniRule"/>
</dbReference>
<dbReference type="CDD" id="cd20714">
    <property type="entry name" value="NSP3_rotavirus"/>
    <property type="match status" value="1"/>
</dbReference>
<dbReference type="Gene3D" id="3.30.70.1610">
    <property type="match status" value="1"/>
</dbReference>
<dbReference type="Gene3D" id="1.20.5.970">
    <property type="entry name" value="Nonstructural RNA-binding protein"/>
    <property type="match status" value="1"/>
</dbReference>
<dbReference type="Gene3D" id="6.10.280.20">
    <property type="entry name" value="Rotavirus non-structural protein NSP3, N-terminal domain"/>
    <property type="match status" value="1"/>
</dbReference>
<dbReference type="HAMAP" id="MF_04094">
    <property type="entry name" value="ROTA_A_NSP3"/>
    <property type="match status" value="1"/>
</dbReference>
<dbReference type="HAMAP" id="MF_04090">
    <property type="entry name" value="ROTA_NSP3"/>
    <property type="match status" value="1"/>
</dbReference>
<dbReference type="InterPro" id="IPR042519">
    <property type="entry name" value="NSP3_N_rotavirus"/>
</dbReference>
<dbReference type="InterPro" id="IPR036082">
    <property type="entry name" value="NSP3_sf"/>
</dbReference>
<dbReference type="InterPro" id="IPR002873">
    <property type="entry name" value="Rotavirus_NSP3"/>
</dbReference>
<dbReference type="Pfam" id="PF01665">
    <property type="entry name" value="Rota_NSP3"/>
    <property type="match status" value="1"/>
</dbReference>
<dbReference type="SUPFAM" id="SSF69903">
    <property type="entry name" value="NSP3 homodimer"/>
    <property type="match status" value="1"/>
</dbReference>
<dbReference type="SUPFAM" id="SSF58030">
    <property type="entry name" value="Rotavirus nonstructural proteins"/>
    <property type="match status" value="1"/>
</dbReference>
<organismHost>
    <name type="scientific">Homo sapiens</name>
    <name type="common">Human</name>
    <dbReference type="NCBI Taxonomy" id="9606"/>
</organismHost>
<protein>
    <recommendedName>
        <fullName evidence="1">Non-structural protein 3</fullName>
        <shortName evidence="1">NSP3</shortName>
    </recommendedName>
    <alternativeName>
        <fullName evidence="1">NCVP4</fullName>
    </alternativeName>
    <alternativeName>
        <fullName evidence="1">Non-structural RNA-binding protein 34</fullName>
        <shortName evidence="1">NS34</shortName>
    </alternativeName>
</protein>
<proteinExistence type="inferred from homology"/>
<comment type="function">
    <text evidence="1">Plays an important role in stimulating the translation of viral mRNAs. These mRNAs are capped but not polyadenylated, instead terminating in a conserved sequence 'GACC' at the 3' that is recognized by NSP3, which competes with host PABPC1 for EIF4G1 binding. The interaction between NSP3 and host EIF4G1 stabilizes the EIF4E-EIF4G1 interaction, thereby facilitating the initiation of capped mRNA translation.</text>
</comment>
<comment type="subunit">
    <text evidence="1">Homodimer. Interacts (via the coiled-coil region) with host ZC3H7B (via LD motif). Interacts with host EIF4G1.</text>
</comment>
<comment type="subcellular location">
    <subcellularLocation>
        <location evidence="1">Host cytoplasm</location>
    </subcellularLocation>
</comment>
<comment type="similarity">
    <text evidence="1">Belongs to the rotavirus NSP3 family.</text>
</comment>
<comment type="sequence caution">
    <conflict type="erroneous initiation">
        <sequence resource="EMBL-CDS" id="ABA34239"/>
    </conflict>
</comment>
<comment type="sequence caution">
    <conflict type="erroneous initiation">
        <sequence resource="EMBL-CDS" id="ABV53270"/>
    </conflict>
</comment>
<organism>
    <name type="scientific">Rotavirus A (strain RVA/Human/Philippines/L26/1987/G12P1B[4])</name>
    <name type="common">RV-A</name>
    <dbReference type="NCBI Taxonomy" id="10953"/>
    <lineage>
        <taxon>Viruses</taxon>
        <taxon>Riboviria</taxon>
        <taxon>Orthornavirae</taxon>
        <taxon>Duplornaviricota</taxon>
        <taxon>Resentoviricetes</taxon>
        <taxon>Reovirales</taxon>
        <taxon>Sedoreoviridae</taxon>
        <taxon>Rotavirus</taxon>
        <taxon>Rotavirus A</taxon>
    </lineage>
</organism>
<accession>A3DSK9</accession>
<accession>B3SRU5</accession>
<sequence length="313" mass="36411">MLKMESTQQMASSIINSSFEAAVVAATSTLELMGIQYDYNEVYTRVKSKFDFVMDDSGVKNNLMGKAATIDQALNGKFSSSIRNRNWMTDSKTVARLDEDVNKLRLLLSSKGIDQKMRVLNACFNVKRVPGKSSSVIKCTRLMKDKIERGEVEVDDTFVEERMEIDTIDWKSRYDQLERRFESLKQRVNEKYNNWVIKARKVNENMNSLQNVISQQQAHINELQIYNNKLERDLQSKIGSVISSIEWYLRSMELSDDIKSDIEQQLNSIDHINPVNAFDDFESILRNLISDYDRIFIMFKGLLQQSNYTYTYE</sequence>
<keyword id="KW-0175">Coiled coil</keyword>
<keyword id="KW-1035">Host cytoplasm</keyword>
<keyword id="KW-0945">Host-virus interaction</keyword>
<keyword id="KW-0694">RNA-binding</keyword>
<keyword id="KW-0810">Translation regulation</keyword>
<evidence type="ECO:0000255" key="1">
    <source>
        <dbReference type="HAMAP-Rule" id="MF_04094"/>
    </source>
</evidence>
<reference key="1">
    <citation type="journal article" date="2007" name="J. Virol.">
        <title>Evolutionary history and global spread of the emerging G12 human rotaviruses.</title>
        <authorList>
            <person name="Rahman M."/>
            <person name="Matthijnssens J."/>
            <person name="Yang X."/>
            <person name="Delbeke T."/>
            <person name="Arijs I."/>
            <person name="Taniguchi K."/>
            <person name="Iturriza-Gomara M."/>
            <person name="Iftekharuddin N."/>
            <person name="Azim T."/>
            <person name="Van Ranst M."/>
        </authorList>
    </citation>
    <scope>NUCLEOTIDE SEQUENCE [GENOMIC RNA]</scope>
</reference>
<reference key="2">
    <citation type="journal article" date="2008" name="J. Virol.">
        <title>Group A human rotavirus genomics: evidence that gene constellations are influenced by viral protein interactions.</title>
        <authorList>
            <person name="Heiman E.M."/>
            <person name="McDonald S.M."/>
            <person name="Barro M."/>
            <person name="Taraporewala Z.F."/>
            <person name="Bar-Magen T."/>
            <person name="Patton J.T."/>
        </authorList>
    </citation>
    <scope>NUCLEOTIDE SEQUENCE [GENOMIC RNA]</scope>
</reference>